<sequence length="361" mass="37748">MTTTPQPPPQPDETPEGAAGAATAGRDPLEIAADLVDDVSRELDPAELASLERLDQPRRILFVHAHPDDESIGTGATMARYAEAGAGVVLLTATRGELGEVIPPELAHLDPDALAEHRTGELATAMEALGVSDHRFLTRPDGTGYRDSGMVWLEPGRAAAGDDVDPRSLAAADPEEVAARIAEVVREVRPQVVVTYEPGGGYGHPDHVRVHEATVRALVLAAGDGSRGAGGAVPWQVAKVYEIVQPERPVREALRRLAETGAEGAGDPEGPLPSVVVPDGEVTTVVDGTGQVPAKIAALRAHATQVTLDLDAAVPAMRLSNGVPQPVWPQEHYRLVHGVAGGPYDAEGRETDLFAGIAPSS</sequence>
<comment type="function">
    <text evidence="1">Catalyzes the deacetylation of 1D-myo-inositol 2-acetamido-2-deoxy-alpha-D-glucopyranoside (GlcNAc-Ins) in the mycothiol biosynthesis pathway.</text>
</comment>
<comment type="catalytic activity">
    <reaction evidence="1">
        <text>1D-myo-inositol 2-acetamido-2-deoxy-alpha-D-glucopyranoside + H2O = 1D-myo-inositol 2-amino-2-deoxy-alpha-D-glucopyranoside + acetate</text>
        <dbReference type="Rhea" id="RHEA:26180"/>
        <dbReference type="ChEBI" id="CHEBI:15377"/>
        <dbReference type="ChEBI" id="CHEBI:30089"/>
        <dbReference type="ChEBI" id="CHEBI:52442"/>
        <dbReference type="ChEBI" id="CHEBI:58886"/>
        <dbReference type="EC" id="3.5.1.103"/>
    </reaction>
</comment>
<comment type="cofactor">
    <cofactor evidence="1">
        <name>Zn(2+)</name>
        <dbReference type="ChEBI" id="CHEBI:29105"/>
    </cofactor>
    <text evidence="1">Binds 1 zinc ion per subunit.</text>
</comment>
<comment type="similarity">
    <text evidence="1">Belongs to the MshB deacetylase family.</text>
</comment>
<organism>
    <name type="scientific">Kineococcus radiotolerans (strain ATCC BAA-149 / DSM 14245 / SRS30216)</name>
    <dbReference type="NCBI Taxonomy" id="266940"/>
    <lineage>
        <taxon>Bacteria</taxon>
        <taxon>Bacillati</taxon>
        <taxon>Actinomycetota</taxon>
        <taxon>Actinomycetes</taxon>
        <taxon>Kineosporiales</taxon>
        <taxon>Kineosporiaceae</taxon>
        <taxon>Kineococcus</taxon>
    </lineage>
</organism>
<gene>
    <name evidence="1" type="primary">mshB</name>
    <name type="ordered locus">Krad_1134</name>
</gene>
<evidence type="ECO:0000255" key="1">
    <source>
        <dbReference type="HAMAP-Rule" id="MF_01696"/>
    </source>
</evidence>
<evidence type="ECO:0000256" key="2">
    <source>
        <dbReference type="SAM" id="MobiDB-lite"/>
    </source>
</evidence>
<accession>A6W733</accession>
<name>MSHB_KINRD</name>
<feature type="chain" id="PRO_0000400190" description="1D-myo-inositol 2-acetamido-2-deoxy-alpha-D-glucopyranoside deacetylase">
    <location>
        <begin position="1"/>
        <end position="361"/>
    </location>
</feature>
<feature type="region of interest" description="Disordered" evidence="2">
    <location>
        <begin position="1"/>
        <end position="27"/>
    </location>
</feature>
<feature type="compositionally biased region" description="Pro residues" evidence="2">
    <location>
        <begin position="1"/>
        <end position="12"/>
    </location>
</feature>
<feature type="compositionally biased region" description="Low complexity" evidence="2">
    <location>
        <begin position="16"/>
        <end position="25"/>
    </location>
</feature>
<feature type="binding site" evidence="1">
    <location>
        <position position="66"/>
    </location>
    <ligand>
        <name>Zn(2+)</name>
        <dbReference type="ChEBI" id="CHEBI:29105"/>
    </ligand>
</feature>
<feature type="binding site" evidence="1">
    <location>
        <position position="69"/>
    </location>
    <ligand>
        <name>Zn(2+)</name>
        <dbReference type="ChEBI" id="CHEBI:29105"/>
    </ligand>
</feature>
<feature type="binding site" evidence="1">
    <location>
        <position position="207"/>
    </location>
    <ligand>
        <name>Zn(2+)</name>
        <dbReference type="ChEBI" id="CHEBI:29105"/>
    </ligand>
</feature>
<protein>
    <recommendedName>
        <fullName evidence="1">1D-myo-inositol 2-acetamido-2-deoxy-alpha-D-glucopyranoside deacetylase</fullName>
        <shortName evidence="1">GlcNAc-Ins deacetylase</shortName>
        <ecNumber evidence="1">3.5.1.103</ecNumber>
    </recommendedName>
    <alternativeName>
        <fullName>N-acetyl-1-D-myo-inositol 2-amino-2-deoxy-alpha-D-glucopyranoside deacetylase</fullName>
    </alternativeName>
</protein>
<keyword id="KW-0378">Hydrolase</keyword>
<keyword id="KW-0479">Metal-binding</keyword>
<keyword id="KW-1185">Reference proteome</keyword>
<keyword id="KW-0862">Zinc</keyword>
<reference key="1">
    <citation type="journal article" date="2008" name="PLoS ONE">
        <title>Survival in nuclear waste, extreme resistance, and potential applications gleaned from the genome sequence of Kineococcus radiotolerans SRS30216.</title>
        <authorList>
            <person name="Bagwell C.E."/>
            <person name="Bhat S."/>
            <person name="Hawkins G.M."/>
            <person name="Smith B.W."/>
            <person name="Biswas T."/>
            <person name="Hoover T.R."/>
            <person name="Saunders E."/>
            <person name="Han C.S."/>
            <person name="Tsodikov O.V."/>
            <person name="Shimkets L.J."/>
        </authorList>
    </citation>
    <scope>NUCLEOTIDE SEQUENCE [LARGE SCALE GENOMIC DNA]</scope>
    <source>
        <strain>ATCC BAA-149 / DSM 14245 / SRS30216</strain>
    </source>
</reference>
<dbReference type="EC" id="3.5.1.103" evidence="1"/>
<dbReference type="EMBL" id="CP000750">
    <property type="protein sequence ID" value="ABS02622.1"/>
    <property type="molecule type" value="Genomic_DNA"/>
</dbReference>
<dbReference type="RefSeq" id="WP_012084524.1">
    <property type="nucleotide sequence ID" value="NC_009664.2"/>
</dbReference>
<dbReference type="SMR" id="A6W733"/>
<dbReference type="STRING" id="266940.Krad_1134"/>
<dbReference type="KEGG" id="kra:Krad_1134"/>
<dbReference type="eggNOG" id="COG2120">
    <property type="taxonomic scope" value="Bacteria"/>
</dbReference>
<dbReference type="HOGENOM" id="CLU_049311_2_1_11"/>
<dbReference type="OrthoDB" id="158614at2"/>
<dbReference type="Proteomes" id="UP000001116">
    <property type="component" value="Chromosome"/>
</dbReference>
<dbReference type="GO" id="GO:0035595">
    <property type="term" value="F:N-acetylglucosaminylinositol deacetylase activity"/>
    <property type="evidence" value="ECO:0007669"/>
    <property type="project" value="UniProtKB-EC"/>
</dbReference>
<dbReference type="GO" id="GO:0008270">
    <property type="term" value="F:zinc ion binding"/>
    <property type="evidence" value="ECO:0007669"/>
    <property type="project" value="UniProtKB-UniRule"/>
</dbReference>
<dbReference type="GO" id="GO:0010125">
    <property type="term" value="P:mycothiol biosynthetic process"/>
    <property type="evidence" value="ECO:0007669"/>
    <property type="project" value="UniProtKB-UniRule"/>
</dbReference>
<dbReference type="Gene3D" id="3.40.50.10320">
    <property type="entry name" value="LmbE-like"/>
    <property type="match status" value="1"/>
</dbReference>
<dbReference type="HAMAP" id="MF_01696">
    <property type="entry name" value="MshB"/>
    <property type="match status" value="1"/>
</dbReference>
<dbReference type="InterPro" id="IPR003737">
    <property type="entry name" value="GlcNAc_PI_deacetylase-related"/>
</dbReference>
<dbReference type="InterPro" id="IPR024078">
    <property type="entry name" value="LmbE-like_dom_sf"/>
</dbReference>
<dbReference type="InterPro" id="IPR017810">
    <property type="entry name" value="Mycothiol_biosynthesis_MshB"/>
</dbReference>
<dbReference type="NCBIfam" id="TIGR03445">
    <property type="entry name" value="mycothiol_MshB"/>
    <property type="match status" value="1"/>
</dbReference>
<dbReference type="PANTHER" id="PTHR12993:SF26">
    <property type="entry name" value="1D-MYO-INOSITOL 2-ACETAMIDO-2-DEOXY-ALPHA-D-GLUCOPYRANOSIDE DEACETYLASE"/>
    <property type="match status" value="1"/>
</dbReference>
<dbReference type="PANTHER" id="PTHR12993">
    <property type="entry name" value="N-ACETYLGLUCOSAMINYL-PHOSPHATIDYLINOSITOL DE-N-ACETYLASE-RELATED"/>
    <property type="match status" value="1"/>
</dbReference>
<dbReference type="Pfam" id="PF02585">
    <property type="entry name" value="PIG-L"/>
    <property type="match status" value="1"/>
</dbReference>
<dbReference type="SUPFAM" id="SSF102588">
    <property type="entry name" value="LmbE-like"/>
    <property type="match status" value="1"/>
</dbReference>
<proteinExistence type="inferred from homology"/>